<comment type="function">
    <text evidence="1">Catalyzes the reversible phosphorylation of UMP to UDP.</text>
</comment>
<comment type="catalytic activity">
    <reaction evidence="1">
        <text>UMP + ATP = UDP + ADP</text>
        <dbReference type="Rhea" id="RHEA:24400"/>
        <dbReference type="ChEBI" id="CHEBI:30616"/>
        <dbReference type="ChEBI" id="CHEBI:57865"/>
        <dbReference type="ChEBI" id="CHEBI:58223"/>
        <dbReference type="ChEBI" id="CHEBI:456216"/>
        <dbReference type="EC" id="2.7.4.22"/>
    </reaction>
</comment>
<comment type="activity regulation">
    <text evidence="1">Inhibited by UTP.</text>
</comment>
<comment type="pathway">
    <text evidence="1">Pyrimidine metabolism; CTP biosynthesis via de novo pathway; UDP from UMP (UMPK route): step 1/1.</text>
</comment>
<comment type="subunit">
    <text evidence="1">Homohexamer.</text>
</comment>
<comment type="subcellular location">
    <subcellularLocation>
        <location evidence="1">Cytoplasm</location>
    </subcellularLocation>
</comment>
<comment type="similarity">
    <text evidence="1">Belongs to the UMP kinase family.</text>
</comment>
<name>PYRH_FRACC</name>
<keyword id="KW-0067">ATP-binding</keyword>
<keyword id="KW-0963">Cytoplasm</keyword>
<keyword id="KW-0418">Kinase</keyword>
<keyword id="KW-0547">Nucleotide-binding</keyword>
<keyword id="KW-0665">Pyrimidine biosynthesis</keyword>
<keyword id="KW-1185">Reference proteome</keyword>
<keyword id="KW-0808">Transferase</keyword>
<accession>Q2J528</accession>
<protein>
    <recommendedName>
        <fullName evidence="1">Uridylate kinase</fullName>
        <shortName evidence="1">UK</shortName>
        <ecNumber evidence="1">2.7.4.22</ecNumber>
    </recommendedName>
    <alternativeName>
        <fullName evidence="1">Uridine monophosphate kinase</fullName>
        <shortName evidence="1">UMP kinase</shortName>
        <shortName evidence="1">UMPK</shortName>
    </alternativeName>
</protein>
<proteinExistence type="inferred from homology"/>
<dbReference type="EC" id="2.7.4.22" evidence="1"/>
<dbReference type="EMBL" id="CP000249">
    <property type="protein sequence ID" value="ABD13614.1"/>
    <property type="molecule type" value="Genomic_DNA"/>
</dbReference>
<dbReference type="SMR" id="Q2J528"/>
<dbReference type="STRING" id="106370.Francci3_4268"/>
<dbReference type="KEGG" id="fra:Francci3_4268"/>
<dbReference type="eggNOG" id="COG0528">
    <property type="taxonomic scope" value="Bacteria"/>
</dbReference>
<dbReference type="HOGENOM" id="CLU_033861_0_0_11"/>
<dbReference type="PhylomeDB" id="Q2J528"/>
<dbReference type="UniPathway" id="UPA00159">
    <property type="reaction ID" value="UER00275"/>
</dbReference>
<dbReference type="Proteomes" id="UP000001937">
    <property type="component" value="Chromosome"/>
</dbReference>
<dbReference type="GO" id="GO:0005737">
    <property type="term" value="C:cytoplasm"/>
    <property type="evidence" value="ECO:0007669"/>
    <property type="project" value="UniProtKB-SubCell"/>
</dbReference>
<dbReference type="GO" id="GO:0005524">
    <property type="term" value="F:ATP binding"/>
    <property type="evidence" value="ECO:0007669"/>
    <property type="project" value="UniProtKB-KW"/>
</dbReference>
<dbReference type="GO" id="GO:0033862">
    <property type="term" value="F:UMP kinase activity"/>
    <property type="evidence" value="ECO:0007669"/>
    <property type="project" value="UniProtKB-EC"/>
</dbReference>
<dbReference type="GO" id="GO:0044210">
    <property type="term" value="P:'de novo' CTP biosynthetic process"/>
    <property type="evidence" value="ECO:0007669"/>
    <property type="project" value="UniProtKB-UniRule"/>
</dbReference>
<dbReference type="GO" id="GO:0006225">
    <property type="term" value="P:UDP biosynthetic process"/>
    <property type="evidence" value="ECO:0007669"/>
    <property type="project" value="TreeGrafter"/>
</dbReference>
<dbReference type="CDD" id="cd04254">
    <property type="entry name" value="AAK_UMPK-PyrH-Ec"/>
    <property type="match status" value="1"/>
</dbReference>
<dbReference type="FunFam" id="3.40.1160.10:FF:000001">
    <property type="entry name" value="Uridylate kinase"/>
    <property type="match status" value="1"/>
</dbReference>
<dbReference type="Gene3D" id="3.40.1160.10">
    <property type="entry name" value="Acetylglutamate kinase-like"/>
    <property type="match status" value="1"/>
</dbReference>
<dbReference type="HAMAP" id="MF_01220_B">
    <property type="entry name" value="PyrH_B"/>
    <property type="match status" value="1"/>
</dbReference>
<dbReference type="InterPro" id="IPR036393">
    <property type="entry name" value="AceGlu_kinase-like_sf"/>
</dbReference>
<dbReference type="InterPro" id="IPR001048">
    <property type="entry name" value="Asp/Glu/Uridylate_kinase"/>
</dbReference>
<dbReference type="InterPro" id="IPR011817">
    <property type="entry name" value="Uridylate_kinase"/>
</dbReference>
<dbReference type="InterPro" id="IPR015963">
    <property type="entry name" value="Uridylate_kinase_bac"/>
</dbReference>
<dbReference type="NCBIfam" id="TIGR02075">
    <property type="entry name" value="pyrH_bact"/>
    <property type="match status" value="1"/>
</dbReference>
<dbReference type="PANTHER" id="PTHR42833">
    <property type="entry name" value="URIDYLATE KINASE"/>
    <property type="match status" value="1"/>
</dbReference>
<dbReference type="PANTHER" id="PTHR42833:SF4">
    <property type="entry name" value="URIDYLATE KINASE PUMPKIN, CHLOROPLASTIC"/>
    <property type="match status" value="1"/>
</dbReference>
<dbReference type="Pfam" id="PF00696">
    <property type="entry name" value="AA_kinase"/>
    <property type="match status" value="1"/>
</dbReference>
<dbReference type="PIRSF" id="PIRSF005650">
    <property type="entry name" value="Uridylate_kin"/>
    <property type="match status" value="1"/>
</dbReference>
<dbReference type="SUPFAM" id="SSF53633">
    <property type="entry name" value="Carbamate kinase-like"/>
    <property type="match status" value="1"/>
</dbReference>
<organism>
    <name type="scientific">Frankia casuarinae (strain DSM 45818 / CECT 9043 / HFP020203 / CcI3)</name>
    <dbReference type="NCBI Taxonomy" id="106370"/>
    <lineage>
        <taxon>Bacteria</taxon>
        <taxon>Bacillati</taxon>
        <taxon>Actinomycetota</taxon>
        <taxon>Actinomycetes</taxon>
        <taxon>Frankiales</taxon>
        <taxon>Frankiaceae</taxon>
        <taxon>Frankia</taxon>
    </lineage>
</organism>
<evidence type="ECO:0000255" key="1">
    <source>
        <dbReference type="HAMAP-Rule" id="MF_01220"/>
    </source>
</evidence>
<evidence type="ECO:0000256" key="2">
    <source>
        <dbReference type="SAM" id="MobiDB-lite"/>
    </source>
</evidence>
<reference key="1">
    <citation type="journal article" date="2007" name="Genome Res.">
        <title>Genome characteristics of facultatively symbiotic Frankia sp. strains reflect host range and host plant biogeography.</title>
        <authorList>
            <person name="Normand P."/>
            <person name="Lapierre P."/>
            <person name="Tisa L.S."/>
            <person name="Gogarten J.P."/>
            <person name="Alloisio N."/>
            <person name="Bagnarol E."/>
            <person name="Bassi C.A."/>
            <person name="Berry A.M."/>
            <person name="Bickhart D.M."/>
            <person name="Choisne N."/>
            <person name="Couloux A."/>
            <person name="Cournoyer B."/>
            <person name="Cruveiller S."/>
            <person name="Daubin V."/>
            <person name="Demange N."/>
            <person name="Francino M.P."/>
            <person name="Goltsman E."/>
            <person name="Huang Y."/>
            <person name="Kopp O.R."/>
            <person name="Labarre L."/>
            <person name="Lapidus A."/>
            <person name="Lavire C."/>
            <person name="Marechal J."/>
            <person name="Martinez M."/>
            <person name="Mastronunzio J.E."/>
            <person name="Mullin B.C."/>
            <person name="Niemann J."/>
            <person name="Pujic P."/>
            <person name="Rawnsley T."/>
            <person name="Rouy Z."/>
            <person name="Schenowitz C."/>
            <person name="Sellstedt A."/>
            <person name="Tavares F."/>
            <person name="Tomkins J.P."/>
            <person name="Vallenet D."/>
            <person name="Valverde C."/>
            <person name="Wall L.G."/>
            <person name="Wang Y."/>
            <person name="Medigue C."/>
            <person name="Benson D.R."/>
        </authorList>
    </citation>
    <scope>NUCLEOTIDE SEQUENCE [LARGE SCALE GENOMIC DNA]</scope>
    <source>
        <strain>DSM 45818 / CECT 9043 / HFP020203 / CcI3</strain>
    </source>
</reference>
<feature type="chain" id="PRO_1000073140" description="Uridylate kinase">
    <location>
        <begin position="1"/>
        <end position="259"/>
    </location>
</feature>
<feature type="region of interest" description="Disordered" evidence="2">
    <location>
        <begin position="236"/>
        <end position="259"/>
    </location>
</feature>
<feature type="binding site" evidence="1">
    <location>
        <begin position="10"/>
        <end position="13"/>
    </location>
    <ligand>
        <name>ATP</name>
        <dbReference type="ChEBI" id="CHEBI:30616"/>
    </ligand>
</feature>
<feature type="binding site" evidence="1">
    <location>
        <position position="52"/>
    </location>
    <ligand>
        <name>UMP</name>
        <dbReference type="ChEBI" id="CHEBI:57865"/>
    </ligand>
</feature>
<feature type="binding site" evidence="1">
    <location>
        <position position="53"/>
    </location>
    <ligand>
        <name>ATP</name>
        <dbReference type="ChEBI" id="CHEBI:30616"/>
    </ligand>
</feature>
<feature type="binding site" evidence="1">
    <location>
        <position position="57"/>
    </location>
    <ligand>
        <name>ATP</name>
        <dbReference type="ChEBI" id="CHEBI:30616"/>
    </ligand>
</feature>
<feature type="binding site" evidence="1">
    <location>
        <position position="72"/>
    </location>
    <ligand>
        <name>UMP</name>
        <dbReference type="ChEBI" id="CHEBI:57865"/>
    </ligand>
</feature>
<feature type="binding site" evidence="1">
    <location>
        <begin position="134"/>
        <end position="141"/>
    </location>
    <ligand>
        <name>UMP</name>
        <dbReference type="ChEBI" id="CHEBI:57865"/>
    </ligand>
</feature>
<feature type="binding site" evidence="1">
    <location>
        <position position="168"/>
    </location>
    <ligand>
        <name>ATP</name>
        <dbReference type="ChEBI" id="CHEBI:30616"/>
    </ligand>
</feature>
<feature type="binding site" evidence="1">
    <location>
        <position position="171"/>
    </location>
    <ligand>
        <name>ATP</name>
        <dbReference type="ChEBI" id="CHEBI:30616"/>
    </ligand>
</feature>
<sequence length="259" mass="27903">MTRYRRVVVKLSGRAIAGSAEFGFDSNALEHLAREIIAVRQSGVEVAIVVGGGNLFRGNQSDRWGIDRVEADNIGMLSTVINSLLLRGKLTALGEDNLRVMTAVPVPAVAEPYIRLRAVHLLEKGATVILACGNGQPFLTTDYPAVQRALELNADAVLAAKDGVDGVYDSDPKINPGARLFSHLSYDEVISRGLRVMDQSAFILARDFGMPLHIFDIEQRGAMTAICRGEHRGTVISSSPEKSEEFGNEVLASPAESTA</sequence>
<gene>
    <name evidence="1" type="primary">pyrH</name>
    <name type="ordered locus">Francci3_4268</name>
</gene>